<gene>
    <name evidence="1" type="primary">rplL</name>
    <name type="ordered locus">CJA_0691</name>
</gene>
<protein>
    <recommendedName>
        <fullName evidence="1">Large ribosomal subunit protein bL12</fullName>
    </recommendedName>
    <alternativeName>
        <fullName evidence="2">50S ribosomal protein L7/L12</fullName>
    </alternativeName>
</protein>
<reference key="1">
    <citation type="journal article" date="2008" name="J. Bacteriol.">
        <title>Insights into plant cell wall degradation from the genome sequence of the soil bacterium Cellvibrio japonicus.</title>
        <authorList>
            <person name="DeBoy R.T."/>
            <person name="Mongodin E.F."/>
            <person name="Fouts D.E."/>
            <person name="Tailford L.E."/>
            <person name="Khouri H."/>
            <person name="Emerson J.B."/>
            <person name="Mohamoud Y."/>
            <person name="Watkins K."/>
            <person name="Henrissat B."/>
            <person name="Gilbert H.J."/>
            <person name="Nelson K.E."/>
        </authorList>
    </citation>
    <scope>NUCLEOTIDE SEQUENCE [LARGE SCALE GENOMIC DNA]</scope>
    <source>
        <strain>Ueda107</strain>
    </source>
</reference>
<comment type="function">
    <text evidence="1">Forms part of the ribosomal stalk which helps the ribosome interact with GTP-bound translation factors. Is thus essential for accurate translation.</text>
</comment>
<comment type="subunit">
    <text evidence="1">Homodimer. Part of the ribosomal stalk of the 50S ribosomal subunit. Forms a multimeric L10(L12)X complex, where L10 forms an elongated spine to which 2 to 4 L12 dimers bind in a sequential fashion. Binds GTP-bound translation factors.</text>
</comment>
<comment type="similarity">
    <text evidence="1">Belongs to the bacterial ribosomal protein bL12 family.</text>
</comment>
<name>RL7_CELJU</name>
<proteinExistence type="inferred from homology"/>
<dbReference type="EMBL" id="CP000934">
    <property type="protein sequence ID" value="ACE83293.1"/>
    <property type="molecule type" value="Genomic_DNA"/>
</dbReference>
<dbReference type="RefSeq" id="WP_012486356.1">
    <property type="nucleotide sequence ID" value="NC_010995.1"/>
</dbReference>
<dbReference type="SMR" id="B3PK29"/>
<dbReference type="STRING" id="498211.CJA_0691"/>
<dbReference type="KEGG" id="cja:CJA_0691"/>
<dbReference type="eggNOG" id="COG0222">
    <property type="taxonomic scope" value="Bacteria"/>
</dbReference>
<dbReference type="HOGENOM" id="CLU_086499_3_2_6"/>
<dbReference type="OrthoDB" id="9811748at2"/>
<dbReference type="Proteomes" id="UP000001036">
    <property type="component" value="Chromosome"/>
</dbReference>
<dbReference type="GO" id="GO:0022625">
    <property type="term" value="C:cytosolic large ribosomal subunit"/>
    <property type="evidence" value="ECO:0007669"/>
    <property type="project" value="TreeGrafter"/>
</dbReference>
<dbReference type="GO" id="GO:0003729">
    <property type="term" value="F:mRNA binding"/>
    <property type="evidence" value="ECO:0007669"/>
    <property type="project" value="TreeGrafter"/>
</dbReference>
<dbReference type="GO" id="GO:0003735">
    <property type="term" value="F:structural constituent of ribosome"/>
    <property type="evidence" value="ECO:0007669"/>
    <property type="project" value="InterPro"/>
</dbReference>
<dbReference type="GO" id="GO:0006412">
    <property type="term" value="P:translation"/>
    <property type="evidence" value="ECO:0007669"/>
    <property type="project" value="UniProtKB-UniRule"/>
</dbReference>
<dbReference type="CDD" id="cd00387">
    <property type="entry name" value="Ribosomal_L7_L12"/>
    <property type="match status" value="1"/>
</dbReference>
<dbReference type="FunFam" id="3.30.1390.10:FF:000001">
    <property type="entry name" value="50S ribosomal protein L7/L12"/>
    <property type="match status" value="1"/>
</dbReference>
<dbReference type="Gene3D" id="3.30.1390.10">
    <property type="match status" value="1"/>
</dbReference>
<dbReference type="Gene3D" id="1.20.5.710">
    <property type="entry name" value="Single helix bin"/>
    <property type="match status" value="1"/>
</dbReference>
<dbReference type="HAMAP" id="MF_00368">
    <property type="entry name" value="Ribosomal_bL12"/>
    <property type="match status" value="1"/>
</dbReference>
<dbReference type="InterPro" id="IPR000206">
    <property type="entry name" value="Ribosomal_bL12"/>
</dbReference>
<dbReference type="InterPro" id="IPR013823">
    <property type="entry name" value="Ribosomal_bL12_C"/>
</dbReference>
<dbReference type="InterPro" id="IPR014719">
    <property type="entry name" value="Ribosomal_bL12_C/ClpS-like"/>
</dbReference>
<dbReference type="InterPro" id="IPR008932">
    <property type="entry name" value="Ribosomal_bL12_oligo"/>
</dbReference>
<dbReference type="InterPro" id="IPR036235">
    <property type="entry name" value="Ribosomal_bL12_oligo_N_sf"/>
</dbReference>
<dbReference type="NCBIfam" id="TIGR00855">
    <property type="entry name" value="L12"/>
    <property type="match status" value="1"/>
</dbReference>
<dbReference type="PANTHER" id="PTHR45987">
    <property type="entry name" value="39S RIBOSOMAL PROTEIN L12"/>
    <property type="match status" value="1"/>
</dbReference>
<dbReference type="PANTHER" id="PTHR45987:SF4">
    <property type="entry name" value="LARGE RIBOSOMAL SUBUNIT PROTEIN BL12M"/>
    <property type="match status" value="1"/>
</dbReference>
<dbReference type="Pfam" id="PF00542">
    <property type="entry name" value="Ribosomal_L12"/>
    <property type="match status" value="1"/>
</dbReference>
<dbReference type="Pfam" id="PF16320">
    <property type="entry name" value="Ribosomal_L12_N"/>
    <property type="match status" value="1"/>
</dbReference>
<dbReference type="SUPFAM" id="SSF54736">
    <property type="entry name" value="ClpS-like"/>
    <property type="match status" value="1"/>
</dbReference>
<dbReference type="SUPFAM" id="SSF48300">
    <property type="entry name" value="Ribosomal protein L7/12, oligomerisation (N-terminal) domain"/>
    <property type="match status" value="1"/>
</dbReference>
<sequence>MSLTKEDIINAIAEMSVKDVVELISAMEEKFGVSAAAATVAVAAGPAAAVEEQTEFTVMLSSVGDKKVNVIKAVRELTGLGLKEAKDLVEAAPKAVKEGVSKADAEAAKAKLEEAGALVEVK</sequence>
<evidence type="ECO:0000255" key="1">
    <source>
        <dbReference type="HAMAP-Rule" id="MF_00368"/>
    </source>
</evidence>
<evidence type="ECO:0000305" key="2"/>
<accession>B3PK29</accession>
<feature type="chain" id="PRO_1000121407" description="Large ribosomal subunit protein bL12">
    <location>
        <begin position="1"/>
        <end position="122"/>
    </location>
</feature>
<keyword id="KW-1185">Reference proteome</keyword>
<keyword id="KW-0687">Ribonucleoprotein</keyword>
<keyword id="KW-0689">Ribosomal protein</keyword>
<organism>
    <name type="scientific">Cellvibrio japonicus (strain Ueda107)</name>
    <name type="common">Pseudomonas fluorescens subsp. cellulosa</name>
    <dbReference type="NCBI Taxonomy" id="498211"/>
    <lineage>
        <taxon>Bacteria</taxon>
        <taxon>Pseudomonadati</taxon>
        <taxon>Pseudomonadota</taxon>
        <taxon>Gammaproteobacteria</taxon>
        <taxon>Cellvibrionales</taxon>
        <taxon>Cellvibrionaceae</taxon>
        <taxon>Cellvibrio</taxon>
    </lineage>
</organism>